<gene>
    <name evidence="1" type="primary">rpmJ</name>
    <name type="ordered locus">CJA_0720</name>
</gene>
<reference key="1">
    <citation type="journal article" date="2008" name="J. Bacteriol.">
        <title>Insights into plant cell wall degradation from the genome sequence of the soil bacterium Cellvibrio japonicus.</title>
        <authorList>
            <person name="DeBoy R.T."/>
            <person name="Mongodin E.F."/>
            <person name="Fouts D.E."/>
            <person name="Tailford L.E."/>
            <person name="Khouri H."/>
            <person name="Emerson J.B."/>
            <person name="Mohamoud Y."/>
            <person name="Watkins K."/>
            <person name="Henrissat B."/>
            <person name="Gilbert H.J."/>
            <person name="Nelson K.E."/>
        </authorList>
    </citation>
    <scope>NUCLEOTIDE SEQUENCE [LARGE SCALE GENOMIC DNA]</scope>
    <source>
        <strain>Ueda107</strain>
    </source>
</reference>
<proteinExistence type="inferred from homology"/>
<organism>
    <name type="scientific">Cellvibrio japonicus (strain Ueda107)</name>
    <name type="common">Pseudomonas fluorescens subsp. cellulosa</name>
    <dbReference type="NCBI Taxonomy" id="498211"/>
    <lineage>
        <taxon>Bacteria</taxon>
        <taxon>Pseudomonadati</taxon>
        <taxon>Pseudomonadota</taxon>
        <taxon>Gammaproteobacteria</taxon>
        <taxon>Cellvibrionales</taxon>
        <taxon>Cellvibrionaceae</taxon>
        <taxon>Cellvibrio</taxon>
    </lineage>
</organism>
<accession>B3PK58</accession>
<sequence>MKVRASVKKICRNCKMVRRNGVLRVICSVEPRHKQRQG</sequence>
<protein>
    <recommendedName>
        <fullName evidence="1">Large ribosomal subunit protein bL36</fullName>
    </recommendedName>
    <alternativeName>
        <fullName evidence="2">50S ribosomal protein L36</fullName>
    </alternativeName>
</protein>
<keyword id="KW-1185">Reference proteome</keyword>
<keyword id="KW-0687">Ribonucleoprotein</keyword>
<keyword id="KW-0689">Ribosomal protein</keyword>
<comment type="similarity">
    <text evidence="1">Belongs to the bacterial ribosomal protein bL36 family.</text>
</comment>
<evidence type="ECO:0000255" key="1">
    <source>
        <dbReference type="HAMAP-Rule" id="MF_00251"/>
    </source>
</evidence>
<evidence type="ECO:0000305" key="2"/>
<feature type="chain" id="PRO_1000101013" description="Large ribosomal subunit protein bL36">
    <location>
        <begin position="1"/>
        <end position="38"/>
    </location>
</feature>
<dbReference type="EMBL" id="CP000934">
    <property type="protein sequence ID" value="ACE84150.1"/>
    <property type="molecule type" value="Genomic_DNA"/>
</dbReference>
<dbReference type="SMR" id="B3PK58"/>
<dbReference type="STRING" id="498211.CJA_0720"/>
<dbReference type="KEGG" id="cja:CJA_0720"/>
<dbReference type="eggNOG" id="COG0257">
    <property type="taxonomic scope" value="Bacteria"/>
</dbReference>
<dbReference type="HOGENOM" id="CLU_135723_6_2_6"/>
<dbReference type="OrthoDB" id="9802520at2"/>
<dbReference type="Proteomes" id="UP000001036">
    <property type="component" value="Chromosome"/>
</dbReference>
<dbReference type="GO" id="GO:0005737">
    <property type="term" value="C:cytoplasm"/>
    <property type="evidence" value="ECO:0007669"/>
    <property type="project" value="UniProtKB-ARBA"/>
</dbReference>
<dbReference type="GO" id="GO:1990904">
    <property type="term" value="C:ribonucleoprotein complex"/>
    <property type="evidence" value="ECO:0007669"/>
    <property type="project" value="UniProtKB-KW"/>
</dbReference>
<dbReference type="GO" id="GO:0005840">
    <property type="term" value="C:ribosome"/>
    <property type="evidence" value="ECO:0007669"/>
    <property type="project" value="UniProtKB-KW"/>
</dbReference>
<dbReference type="GO" id="GO:0003735">
    <property type="term" value="F:structural constituent of ribosome"/>
    <property type="evidence" value="ECO:0007669"/>
    <property type="project" value="InterPro"/>
</dbReference>
<dbReference type="GO" id="GO:0006412">
    <property type="term" value="P:translation"/>
    <property type="evidence" value="ECO:0007669"/>
    <property type="project" value="UniProtKB-UniRule"/>
</dbReference>
<dbReference type="HAMAP" id="MF_00251">
    <property type="entry name" value="Ribosomal_bL36"/>
    <property type="match status" value="1"/>
</dbReference>
<dbReference type="InterPro" id="IPR000473">
    <property type="entry name" value="Ribosomal_bL36"/>
</dbReference>
<dbReference type="InterPro" id="IPR035977">
    <property type="entry name" value="Ribosomal_bL36_sp"/>
</dbReference>
<dbReference type="NCBIfam" id="TIGR01022">
    <property type="entry name" value="rpmJ_bact"/>
    <property type="match status" value="1"/>
</dbReference>
<dbReference type="PANTHER" id="PTHR42888">
    <property type="entry name" value="50S RIBOSOMAL PROTEIN L36, CHLOROPLASTIC"/>
    <property type="match status" value="1"/>
</dbReference>
<dbReference type="PANTHER" id="PTHR42888:SF1">
    <property type="entry name" value="LARGE RIBOSOMAL SUBUNIT PROTEIN BL36C"/>
    <property type="match status" value="1"/>
</dbReference>
<dbReference type="Pfam" id="PF00444">
    <property type="entry name" value="Ribosomal_L36"/>
    <property type="match status" value="1"/>
</dbReference>
<dbReference type="SUPFAM" id="SSF57840">
    <property type="entry name" value="Ribosomal protein L36"/>
    <property type="match status" value="1"/>
</dbReference>
<dbReference type="PROSITE" id="PS00828">
    <property type="entry name" value="RIBOSOMAL_L36"/>
    <property type="match status" value="1"/>
</dbReference>
<name>RL36_CELJU</name>